<protein>
    <recommendedName>
        <fullName evidence="2">Ornithine carbamoyltransferase</fullName>
        <shortName evidence="2">OTCase</shortName>
        <ecNumber evidence="2">2.1.3.3</ecNumber>
    </recommendedName>
</protein>
<proteinExistence type="inferred from homology"/>
<name>OTC_ECO45</name>
<comment type="function">
    <text evidence="1">Reversibly catalyzes the transfer of the carbamoyl group from carbamoyl phosphate (CP) to the N(epsilon) atom of ornithine (ORN) to produce L-citrulline.</text>
</comment>
<comment type="catalytic activity">
    <reaction evidence="2">
        <text>carbamoyl phosphate + L-ornithine = L-citrulline + phosphate + H(+)</text>
        <dbReference type="Rhea" id="RHEA:19513"/>
        <dbReference type="ChEBI" id="CHEBI:15378"/>
        <dbReference type="ChEBI" id="CHEBI:43474"/>
        <dbReference type="ChEBI" id="CHEBI:46911"/>
        <dbReference type="ChEBI" id="CHEBI:57743"/>
        <dbReference type="ChEBI" id="CHEBI:58228"/>
        <dbReference type="EC" id="2.1.3.3"/>
    </reaction>
</comment>
<comment type="pathway">
    <text evidence="2">Amino-acid biosynthesis; L-arginine biosynthesis; L-arginine from L-ornithine and carbamoyl phosphate: step 1/3.</text>
</comment>
<comment type="subcellular location">
    <subcellularLocation>
        <location evidence="2">Cytoplasm</location>
    </subcellularLocation>
</comment>
<comment type="similarity">
    <text evidence="2">Belongs to the aspartate/ornithine carbamoyltransferase superfamily. OTCase family.</text>
</comment>
<gene>
    <name evidence="2" type="primary">argI</name>
    <name type="ordered locus">ECS88_4841</name>
</gene>
<keyword id="KW-0028">Amino-acid biosynthesis</keyword>
<keyword id="KW-0055">Arginine biosynthesis</keyword>
<keyword id="KW-0963">Cytoplasm</keyword>
<keyword id="KW-1185">Reference proteome</keyword>
<keyword id="KW-0808">Transferase</keyword>
<dbReference type="EC" id="2.1.3.3" evidence="2"/>
<dbReference type="EMBL" id="CU928161">
    <property type="protein sequence ID" value="CAR05989.1"/>
    <property type="molecule type" value="Genomic_DNA"/>
</dbReference>
<dbReference type="SMR" id="B7MLQ9"/>
<dbReference type="KEGG" id="ecz:ECS88_4841"/>
<dbReference type="HOGENOM" id="CLU_043846_3_1_6"/>
<dbReference type="UniPathway" id="UPA00068">
    <property type="reaction ID" value="UER00112"/>
</dbReference>
<dbReference type="Proteomes" id="UP000000747">
    <property type="component" value="Chromosome"/>
</dbReference>
<dbReference type="GO" id="GO:0005737">
    <property type="term" value="C:cytoplasm"/>
    <property type="evidence" value="ECO:0007669"/>
    <property type="project" value="UniProtKB-SubCell"/>
</dbReference>
<dbReference type="GO" id="GO:0016597">
    <property type="term" value="F:amino acid binding"/>
    <property type="evidence" value="ECO:0007669"/>
    <property type="project" value="InterPro"/>
</dbReference>
<dbReference type="GO" id="GO:0004585">
    <property type="term" value="F:ornithine carbamoyltransferase activity"/>
    <property type="evidence" value="ECO:0007669"/>
    <property type="project" value="UniProtKB-UniRule"/>
</dbReference>
<dbReference type="GO" id="GO:0042450">
    <property type="term" value="P:arginine biosynthetic process via ornithine"/>
    <property type="evidence" value="ECO:0007669"/>
    <property type="project" value="TreeGrafter"/>
</dbReference>
<dbReference type="GO" id="GO:0019240">
    <property type="term" value="P:citrulline biosynthetic process"/>
    <property type="evidence" value="ECO:0007669"/>
    <property type="project" value="TreeGrafter"/>
</dbReference>
<dbReference type="GO" id="GO:0006526">
    <property type="term" value="P:L-arginine biosynthetic process"/>
    <property type="evidence" value="ECO:0007669"/>
    <property type="project" value="UniProtKB-UniRule"/>
</dbReference>
<dbReference type="FunFam" id="3.40.50.1370:FF:000003">
    <property type="entry name" value="Ornithine carbamoyltransferase"/>
    <property type="match status" value="1"/>
</dbReference>
<dbReference type="FunFam" id="3.40.50.1370:FF:000004">
    <property type="entry name" value="Ornithine carbamoyltransferase"/>
    <property type="match status" value="1"/>
</dbReference>
<dbReference type="Gene3D" id="3.40.50.1370">
    <property type="entry name" value="Aspartate/ornithine carbamoyltransferase"/>
    <property type="match status" value="2"/>
</dbReference>
<dbReference type="HAMAP" id="MF_01109">
    <property type="entry name" value="OTCase"/>
    <property type="match status" value="1"/>
</dbReference>
<dbReference type="InterPro" id="IPR006132">
    <property type="entry name" value="Asp/Orn_carbamoyltranf_P-bd"/>
</dbReference>
<dbReference type="InterPro" id="IPR006130">
    <property type="entry name" value="Asp/Orn_carbamoylTrfase"/>
</dbReference>
<dbReference type="InterPro" id="IPR036901">
    <property type="entry name" value="Asp/Orn_carbamoylTrfase_sf"/>
</dbReference>
<dbReference type="InterPro" id="IPR006131">
    <property type="entry name" value="Asp_carbamoyltransf_Asp/Orn-bd"/>
</dbReference>
<dbReference type="InterPro" id="IPR002292">
    <property type="entry name" value="Orn/put_carbamltrans"/>
</dbReference>
<dbReference type="InterPro" id="IPR024904">
    <property type="entry name" value="OTCase_ArgI"/>
</dbReference>
<dbReference type="NCBIfam" id="TIGR00658">
    <property type="entry name" value="orni_carb_tr"/>
    <property type="match status" value="1"/>
</dbReference>
<dbReference type="NCBIfam" id="NF003286">
    <property type="entry name" value="PRK04284.1"/>
    <property type="match status" value="1"/>
</dbReference>
<dbReference type="NCBIfam" id="NF009213">
    <property type="entry name" value="PRK12562.1"/>
    <property type="match status" value="1"/>
</dbReference>
<dbReference type="PANTHER" id="PTHR45753:SF4">
    <property type="entry name" value="ORNITHINE CARBAMOYLTRANSFERASE SUBUNIT F-RELATED"/>
    <property type="match status" value="1"/>
</dbReference>
<dbReference type="PANTHER" id="PTHR45753">
    <property type="entry name" value="ORNITHINE CARBAMOYLTRANSFERASE, MITOCHONDRIAL"/>
    <property type="match status" value="1"/>
</dbReference>
<dbReference type="Pfam" id="PF00185">
    <property type="entry name" value="OTCace"/>
    <property type="match status" value="1"/>
</dbReference>
<dbReference type="Pfam" id="PF02729">
    <property type="entry name" value="OTCace_N"/>
    <property type="match status" value="1"/>
</dbReference>
<dbReference type="PRINTS" id="PR00100">
    <property type="entry name" value="AOTCASE"/>
</dbReference>
<dbReference type="PRINTS" id="PR00102">
    <property type="entry name" value="OTCASE"/>
</dbReference>
<dbReference type="SUPFAM" id="SSF53671">
    <property type="entry name" value="Aspartate/ornithine carbamoyltransferase"/>
    <property type="match status" value="1"/>
</dbReference>
<dbReference type="PROSITE" id="PS00097">
    <property type="entry name" value="CARBAMOYLTRANSFERASE"/>
    <property type="match status" value="1"/>
</dbReference>
<accession>B7MLQ9</accession>
<reference key="1">
    <citation type="journal article" date="2009" name="PLoS Genet.">
        <title>Organised genome dynamics in the Escherichia coli species results in highly diverse adaptive paths.</title>
        <authorList>
            <person name="Touchon M."/>
            <person name="Hoede C."/>
            <person name="Tenaillon O."/>
            <person name="Barbe V."/>
            <person name="Baeriswyl S."/>
            <person name="Bidet P."/>
            <person name="Bingen E."/>
            <person name="Bonacorsi S."/>
            <person name="Bouchier C."/>
            <person name="Bouvet O."/>
            <person name="Calteau A."/>
            <person name="Chiapello H."/>
            <person name="Clermont O."/>
            <person name="Cruveiller S."/>
            <person name="Danchin A."/>
            <person name="Diard M."/>
            <person name="Dossat C."/>
            <person name="Karoui M.E."/>
            <person name="Frapy E."/>
            <person name="Garry L."/>
            <person name="Ghigo J.M."/>
            <person name="Gilles A.M."/>
            <person name="Johnson J."/>
            <person name="Le Bouguenec C."/>
            <person name="Lescat M."/>
            <person name="Mangenot S."/>
            <person name="Martinez-Jehanne V."/>
            <person name="Matic I."/>
            <person name="Nassif X."/>
            <person name="Oztas S."/>
            <person name="Petit M.A."/>
            <person name="Pichon C."/>
            <person name="Rouy Z."/>
            <person name="Ruf C.S."/>
            <person name="Schneider D."/>
            <person name="Tourret J."/>
            <person name="Vacherie B."/>
            <person name="Vallenet D."/>
            <person name="Medigue C."/>
            <person name="Rocha E.P.C."/>
            <person name="Denamur E."/>
        </authorList>
    </citation>
    <scope>NUCLEOTIDE SEQUENCE [LARGE SCALE GENOMIC DNA]</scope>
    <source>
        <strain>S88 / ExPEC</strain>
    </source>
</reference>
<feature type="chain" id="PRO_1000163967" description="Ornithine carbamoyltransferase">
    <location>
        <begin position="1"/>
        <end position="334"/>
    </location>
</feature>
<feature type="binding site" evidence="2">
    <location>
        <begin position="56"/>
        <end position="59"/>
    </location>
    <ligand>
        <name>carbamoyl phosphate</name>
        <dbReference type="ChEBI" id="CHEBI:58228"/>
    </ligand>
</feature>
<feature type="binding site" evidence="2">
    <location>
        <position position="83"/>
    </location>
    <ligand>
        <name>carbamoyl phosphate</name>
        <dbReference type="ChEBI" id="CHEBI:58228"/>
    </ligand>
</feature>
<feature type="binding site" evidence="2">
    <location>
        <position position="107"/>
    </location>
    <ligand>
        <name>carbamoyl phosphate</name>
        <dbReference type="ChEBI" id="CHEBI:58228"/>
    </ligand>
</feature>
<feature type="binding site" evidence="2">
    <location>
        <begin position="134"/>
        <end position="137"/>
    </location>
    <ligand>
        <name>carbamoyl phosphate</name>
        <dbReference type="ChEBI" id="CHEBI:58228"/>
    </ligand>
</feature>
<feature type="binding site" evidence="2">
    <location>
        <position position="168"/>
    </location>
    <ligand>
        <name>L-ornithine</name>
        <dbReference type="ChEBI" id="CHEBI:46911"/>
    </ligand>
</feature>
<feature type="binding site" evidence="2">
    <location>
        <position position="232"/>
    </location>
    <ligand>
        <name>L-ornithine</name>
        <dbReference type="ChEBI" id="CHEBI:46911"/>
    </ligand>
</feature>
<feature type="binding site" evidence="2">
    <location>
        <begin position="236"/>
        <end position="237"/>
    </location>
    <ligand>
        <name>L-ornithine</name>
        <dbReference type="ChEBI" id="CHEBI:46911"/>
    </ligand>
</feature>
<feature type="binding site" evidence="2">
    <location>
        <begin position="274"/>
        <end position="275"/>
    </location>
    <ligand>
        <name>carbamoyl phosphate</name>
        <dbReference type="ChEBI" id="CHEBI:58228"/>
    </ligand>
</feature>
<feature type="binding site" evidence="2">
    <location>
        <position position="320"/>
    </location>
    <ligand>
        <name>carbamoyl phosphate</name>
        <dbReference type="ChEBI" id="CHEBI:58228"/>
    </ligand>
</feature>
<organism>
    <name type="scientific">Escherichia coli O45:K1 (strain S88 / ExPEC)</name>
    <dbReference type="NCBI Taxonomy" id="585035"/>
    <lineage>
        <taxon>Bacteria</taxon>
        <taxon>Pseudomonadati</taxon>
        <taxon>Pseudomonadota</taxon>
        <taxon>Gammaproteobacteria</taxon>
        <taxon>Enterobacterales</taxon>
        <taxon>Enterobacteriaceae</taxon>
        <taxon>Escherichia</taxon>
    </lineage>
</organism>
<evidence type="ECO:0000250" key="1"/>
<evidence type="ECO:0000255" key="2">
    <source>
        <dbReference type="HAMAP-Rule" id="MF_01109"/>
    </source>
</evidence>
<sequence length="334" mass="36894">MSGFYHKHFLKLLDFTPAELNSLLQLAAKLKADKKSGKEEAKLTGKNIALIFEKDSTRTRCSFEVAAYDQGARVTYLGPSGSQIGHKESIKDTARVLGRMYDGIQYRGYGQEIVETLAEYAGVPVWNGLTNEFHPTQLLADLLTMQEHLPGKTFNEMTLVYAGDARNNMGNSMLEAAALTGLDLRLVAPKACWPEAALVTECRALAQQNGGDITLTEDVAKGVEGADFIYTDVWVSMGEAKEKWAERIALLRDYQVNSKMMQLTGNPEVKFLHCLPAFHDDQTTLGKKMAEEFGLHGGMEVTDEVFESAASIVFDQAENRMHTIKAVMVATLSK</sequence>